<sequence length="502" mass="59500">MEEFQVYLELNRSRRHDFLYPLIFREYIYALAHDHGLNKSMIFLENQGYGNKFSSLIVKRLIIRMDQQNHLIISANDXNQNPFFGHNNNLYSQMISAGFAVIVEIPFSLRLVSYSQGEEVAKSHNLQSIHSIFPFLEDKFSHLNYVLDVLIPHPIHLEILVQALRYWVKDASSLHLLRFSLYEYCNLKSFITPKKSISIFNPRLFLFLYNSHVCEYESIFLFLRNQSSHLRSTSSGVFLERIYFYGKIEYLVEVFYNDFQNNLWLFKDPFIHFIRYQGKAILASKDTSLLMNKWKYYFVDLWQYYFYMWSQSGRVRINQLSKYSLDFLGYLSSVRLNPSVVRSQMLENSFIIDNAMKKLDTRIPIISLIGSLSKAKFCNTLGHPISKPTWADSSDSDIIDRFVRICRNLSHYHSGSSKKKSLYRIKYILRLSCVKTLARKHKSTVRAFLKRLGSEFLEEFFTEEEHVFSLIFPKVFFTSRKLYRGRIWYLDIICINALVNHE</sequence>
<geneLocation type="chloroplast"/>
<protein>
    <recommendedName>
        <fullName evidence="1">Maturase K</fullName>
    </recommendedName>
    <alternativeName>
        <fullName evidence="1">Intron maturase</fullName>
    </alternativeName>
</protein>
<organism>
    <name type="scientific">Tilia americana</name>
    <name type="common">American basswood</name>
    <dbReference type="NCBI Taxonomy" id="66669"/>
    <lineage>
        <taxon>Eukaryota</taxon>
        <taxon>Viridiplantae</taxon>
        <taxon>Streptophyta</taxon>
        <taxon>Embryophyta</taxon>
        <taxon>Tracheophyta</taxon>
        <taxon>Spermatophyta</taxon>
        <taxon>Magnoliopsida</taxon>
        <taxon>eudicotyledons</taxon>
        <taxon>Gunneridae</taxon>
        <taxon>Pentapetalae</taxon>
        <taxon>rosids</taxon>
        <taxon>malvids</taxon>
        <taxon>Malvales</taxon>
        <taxon>Malvaceae</taxon>
        <taxon>Tilioideae</taxon>
        <taxon>Tilia</taxon>
    </lineage>
</organism>
<evidence type="ECO:0000255" key="1">
    <source>
        <dbReference type="HAMAP-Rule" id="MF_01390"/>
    </source>
</evidence>
<accession>Q6EIH3</accession>
<comment type="function">
    <text evidence="1">Usually encoded in the trnK tRNA gene intron. Probably assists in splicing its own and other chloroplast group II introns.</text>
</comment>
<comment type="subcellular location">
    <subcellularLocation>
        <location>Plastid</location>
        <location>Chloroplast</location>
    </subcellularLocation>
</comment>
<comment type="similarity">
    <text evidence="1">Belongs to the intron maturase 2 family. MatK subfamily.</text>
</comment>
<gene>
    <name evidence="1" type="primary">matK</name>
</gene>
<name>MATK_TILAM</name>
<keyword id="KW-0150">Chloroplast</keyword>
<keyword id="KW-0507">mRNA processing</keyword>
<keyword id="KW-0934">Plastid</keyword>
<keyword id="KW-0694">RNA-binding</keyword>
<keyword id="KW-0819">tRNA processing</keyword>
<proteinExistence type="inferred from homology"/>
<reference key="1">
    <citation type="submission" date="2003-06" db="EMBL/GenBank/DDBJ databases">
        <title>Phylogenetic analysis of Malvaceae sensu lato based on chloroplast and nuclear DNA sequences.</title>
        <authorList>
            <person name="Nyffeler R."/>
            <person name="Yen A."/>
            <person name="Alverson W.S."/>
            <person name="Bayer C."/>
            <person name="Blattner F."/>
            <person name="Whitlock B."/>
            <person name="Chase M.W."/>
            <person name="Baum D.A."/>
        </authorList>
    </citation>
    <scope>NUCLEOTIDE SEQUENCE [GENOMIC DNA]</scope>
</reference>
<feature type="chain" id="PRO_0000143739" description="Maturase K">
    <location>
        <begin position="1"/>
        <end position="502"/>
    </location>
</feature>
<dbReference type="EMBL" id="AY321191">
    <property type="protein sequence ID" value="AAQ84273.1"/>
    <property type="molecule type" value="Genomic_DNA"/>
</dbReference>
<dbReference type="GO" id="GO:0009507">
    <property type="term" value="C:chloroplast"/>
    <property type="evidence" value="ECO:0007669"/>
    <property type="project" value="UniProtKB-SubCell"/>
</dbReference>
<dbReference type="GO" id="GO:0003723">
    <property type="term" value="F:RNA binding"/>
    <property type="evidence" value="ECO:0007669"/>
    <property type="project" value="UniProtKB-KW"/>
</dbReference>
<dbReference type="GO" id="GO:0006397">
    <property type="term" value="P:mRNA processing"/>
    <property type="evidence" value="ECO:0007669"/>
    <property type="project" value="UniProtKB-KW"/>
</dbReference>
<dbReference type="GO" id="GO:0008380">
    <property type="term" value="P:RNA splicing"/>
    <property type="evidence" value="ECO:0007669"/>
    <property type="project" value="UniProtKB-UniRule"/>
</dbReference>
<dbReference type="GO" id="GO:0008033">
    <property type="term" value="P:tRNA processing"/>
    <property type="evidence" value="ECO:0007669"/>
    <property type="project" value="UniProtKB-KW"/>
</dbReference>
<dbReference type="HAMAP" id="MF_01390">
    <property type="entry name" value="MatK"/>
    <property type="match status" value="1"/>
</dbReference>
<dbReference type="InterPro" id="IPR024937">
    <property type="entry name" value="Domain_X"/>
</dbReference>
<dbReference type="InterPro" id="IPR002866">
    <property type="entry name" value="Maturase_MatK"/>
</dbReference>
<dbReference type="InterPro" id="IPR024942">
    <property type="entry name" value="Maturase_MatK_N"/>
</dbReference>
<dbReference type="PANTHER" id="PTHR34811">
    <property type="entry name" value="MATURASE K"/>
    <property type="match status" value="1"/>
</dbReference>
<dbReference type="PANTHER" id="PTHR34811:SF1">
    <property type="entry name" value="MATURASE K"/>
    <property type="match status" value="1"/>
</dbReference>
<dbReference type="Pfam" id="PF01348">
    <property type="entry name" value="Intron_maturas2"/>
    <property type="match status" value="1"/>
</dbReference>
<dbReference type="Pfam" id="PF01824">
    <property type="entry name" value="MatK_N"/>
    <property type="match status" value="1"/>
</dbReference>